<evidence type="ECO:0000255" key="1">
    <source>
        <dbReference type="HAMAP-Rule" id="MF_00402"/>
    </source>
</evidence>
<evidence type="ECO:0000305" key="2"/>
<sequence length="115" mass="13146">MNPLIQSLTEGQLRSDIPEFRAGDTVRVHAKVVEGTRERIQIFEGVVISRKGQGISEMYTVRKISGGIGVERTFPIHTPRVDKIEVVRYGKVRRAKLYYLRALQGKAARIKEIRR</sequence>
<dbReference type="EMBL" id="AE009948">
    <property type="protein sequence ID" value="AAM99445.1"/>
    <property type="molecule type" value="Genomic_DNA"/>
</dbReference>
<dbReference type="RefSeq" id="NP_687573.1">
    <property type="nucleotide sequence ID" value="NC_004116.1"/>
</dbReference>
<dbReference type="RefSeq" id="WP_001068667.1">
    <property type="nucleotide sequence ID" value="NC_004116.1"/>
</dbReference>
<dbReference type="SMR" id="Q8E121"/>
<dbReference type="STRING" id="208435.SAG0544"/>
<dbReference type="GeneID" id="93825928"/>
<dbReference type="KEGG" id="sag:SAG0544"/>
<dbReference type="PATRIC" id="fig|208435.3.peg.540"/>
<dbReference type="HOGENOM" id="CLU_103507_2_1_9"/>
<dbReference type="OrthoDB" id="9803541at2"/>
<dbReference type="PRO" id="PR:Q8E121"/>
<dbReference type="Proteomes" id="UP000000821">
    <property type="component" value="Chromosome"/>
</dbReference>
<dbReference type="GO" id="GO:0022625">
    <property type="term" value="C:cytosolic large ribosomal subunit"/>
    <property type="evidence" value="ECO:0007669"/>
    <property type="project" value="TreeGrafter"/>
</dbReference>
<dbReference type="GO" id="GO:0003735">
    <property type="term" value="F:structural constituent of ribosome"/>
    <property type="evidence" value="ECO:0007669"/>
    <property type="project" value="InterPro"/>
</dbReference>
<dbReference type="GO" id="GO:0006412">
    <property type="term" value="P:translation"/>
    <property type="evidence" value="ECO:0007669"/>
    <property type="project" value="UniProtKB-UniRule"/>
</dbReference>
<dbReference type="FunFam" id="2.30.30.790:FF:000001">
    <property type="entry name" value="50S ribosomal protein L19"/>
    <property type="match status" value="1"/>
</dbReference>
<dbReference type="Gene3D" id="2.30.30.790">
    <property type="match status" value="1"/>
</dbReference>
<dbReference type="HAMAP" id="MF_00402">
    <property type="entry name" value="Ribosomal_bL19"/>
    <property type="match status" value="1"/>
</dbReference>
<dbReference type="InterPro" id="IPR001857">
    <property type="entry name" value="Ribosomal_bL19"/>
</dbReference>
<dbReference type="InterPro" id="IPR018257">
    <property type="entry name" value="Ribosomal_bL19_CS"/>
</dbReference>
<dbReference type="InterPro" id="IPR038657">
    <property type="entry name" value="Ribosomal_bL19_sf"/>
</dbReference>
<dbReference type="InterPro" id="IPR008991">
    <property type="entry name" value="Translation_prot_SH3-like_sf"/>
</dbReference>
<dbReference type="NCBIfam" id="TIGR01024">
    <property type="entry name" value="rplS_bact"/>
    <property type="match status" value="1"/>
</dbReference>
<dbReference type="PANTHER" id="PTHR15680:SF9">
    <property type="entry name" value="LARGE RIBOSOMAL SUBUNIT PROTEIN BL19M"/>
    <property type="match status" value="1"/>
</dbReference>
<dbReference type="PANTHER" id="PTHR15680">
    <property type="entry name" value="RIBOSOMAL PROTEIN L19"/>
    <property type="match status" value="1"/>
</dbReference>
<dbReference type="Pfam" id="PF01245">
    <property type="entry name" value="Ribosomal_L19"/>
    <property type="match status" value="1"/>
</dbReference>
<dbReference type="PIRSF" id="PIRSF002191">
    <property type="entry name" value="Ribosomal_L19"/>
    <property type="match status" value="1"/>
</dbReference>
<dbReference type="PRINTS" id="PR00061">
    <property type="entry name" value="RIBOSOMALL19"/>
</dbReference>
<dbReference type="SUPFAM" id="SSF50104">
    <property type="entry name" value="Translation proteins SH3-like domain"/>
    <property type="match status" value="1"/>
</dbReference>
<dbReference type="PROSITE" id="PS01015">
    <property type="entry name" value="RIBOSOMAL_L19"/>
    <property type="match status" value="1"/>
</dbReference>
<name>RL19_STRA5</name>
<feature type="chain" id="PRO_0000163537" description="Large ribosomal subunit protein bL19">
    <location>
        <begin position="1"/>
        <end position="115"/>
    </location>
</feature>
<gene>
    <name evidence="1" type="primary">rplS</name>
    <name type="ordered locus">SAG0544</name>
</gene>
<organism>
    <name type="scientific">Streptococcus agalactiae serotype V (strain ATCC BAA-611 / 2603 V/R)</name>
    <dbReference type="NCBI Taxonomy" id="208435"/>
    <lineage>
        <taxon>Bacteria</taxon>
        <taxon>Bacillati</taxon>
        <taxon>Bacillota</taxon>
        <taxon>Bacilli</taxon>
        <taxon>Lactobacillales</taxon>
        <taxon>Streptococcaceae</taxon>
        <taxon>Streptococcus</taxon>
    </lineage>
</organism>
<comment type="function">
    <text evidence="1">This protein is located at the 30S-50S ribosomal subunit interface and may play a role in the structure and function of the aminoacyl-tRNA binding site.</text>
</comment>
<comment type="similarity">
    <text evidence="1">Belongs to the bacterial ribosomal protein bL19 family.</text>
</comment>
<protein>
    <recommendedName>
        <fullName evidence="1">Large ribosomal subunit protein bL19</fullName>
    </recommendedName>
    <alternativeName>
        <fullName evidence="2">50S ribosomal protein L19</fullName>
    </alternativeName>
</protein>
<accession>Q8E121</accession>
<reference key="1">
    <citation type="journal article" date="2002" name="Proc. Natl. Acad. Sci. U.S.A.">
        <title>Complete genome sequence and comparative genomic analysis of an emerging human pathogen, serotype V Streptococcus agalactiae.</title>
        <authorList>
            <person name="Tettelin H."/>
            <person name="Masignani V."/>
            <person name="Cieslewicz M.J."/>
            <person name="Eisen J.A."/>
            <person name="Peterson S.N."/>
            <person name="Wessels M.R."/>
            <person name="Paulsen I.T."/>
            <person name="Nelson K.E."/>
            <person name="Margarit I."/>
            <person name="Read T.D."/>
            <person name="Madoff L.C."/>
            <person name="Wolf A.M."/>
            <person name="Beanan M.J."/>
            <person name="Brinkac L.M."/>
            <person name="Daugherty S.C."/>
            <person name="DeBoy R.T."/>
            <person name="Durkin A.S."/>
            <person name="Kolonay J.F."/>
            <person name="Madupu R."/>
            <person name="Lewis M.R."/>
            <person name="Radune D."/>
            <person name="Fedorova N.B."/>
            <person name="Scanlan D."/>
            <person name="Khouri H.M."/>
            <person name="Mulligan S."/>
            <person name="Carty H.A."/>
            <person name="Cline R.T."/>
            <person name="Van Aken S.E."/>
            <person name="Gill J."/>
            <person name="Scarselli M."/>
            <person name="Mora M."/>
            <person name="Iacobini E.T."/>
            <person name="Brettoni C."/>
            <person name="Galli G."/>
            <person name="Mariani M."/>
            <person name="Vegni F."/>
            <person name="Maione D."/>
            <person name="Rinaudo D."/>
            <person name="Rappuoli R."/>
            <person name="Telford J.L."/>
            <person name="Kasper D.L."/>
            <person name="Grandi G."/>
            <person name="Fraser C.M."/>
        </authorList>
    </citation>
    <scope>NUCLEOTIDE SEQUENCE [LARGE SCALE GENOMIC DNA]</scope>
    <source>
        <strain>ATCC BAA-611 / 2603 V/R</strain>
    </source>
</reference>
<keyword id="KW-1185">Reference proteome</keyword>
<keyword id="KW-0687">Ribonucleoprotein</keyword>
<keyword id="KW-0689">Ribosomal protein</keyword>
<proteinExistence type="inferred from homology"/>